<gene>
    <name evidence="1" type="primary">rlmE</name>
    <name evidence="1" type="synonym">ftsJ</name>
    <name evidence="1" type="synonym">rrmJ</name>
    <name type="ordered locus">SeAg_B3486</name>
</gene>
<name>RLME_SALA4</name>
<dbReference type="EC" id="2.1.1.166" evidence="1"/>
<dbReference type="EMBL" id="CP001138">
    <property type="protein sequence ID" value="ACH48515.1"/>
    <property type="molecule type" value="Genomic_DNA"/>
</dbReference>
<dbReference type="RefSeq" id="WP_000145974.1">
    <property type="nucleotide sequence ID" value="NC_011149.1"/>
</dbReference>
<dbReference type="SMR" id="B5F6U7"/>
<dbReference type="KEGG" id="sea:SeAg_B3486"/>
<dbReference type="HOGENOM" id="CLU_009422_4_0_6"/>
<dbReference type="Proteomes" id="UP000008819">
    <property type="component" value="Chromosome"/>
</dbReference>
<dbReference type="GO" id="GO:0005737">
    <property type="term" value="C:cytoplasm"/>
    <property type="evidence" value="ECO:0007669"/>
    <property type="project" value="UniProtKB-SubCell"/>
</dbReference>
<dbReference type="GO" id="GO:0008650">
    <property type="term" value="F:rRNA (uridine-2'-O-)-methyltransferase activity"/>
    <property type="evidence" value="ECO:0007669"/>
    <property type="project" value="UniProtKB-UniRule"/>
</dbReference>
<dbReference type="CDD" id="cd02440">
    <property type="entry name" value="AdoMet_MTases"/>
    <property type="match status" value="1"/>
</dbReference>
<dbReference type="FunFam" id="3.40.50.150:FF:000005">
    <property type="entry name" value="Ribosomal RNA large subunit methyltransferase E"/>
    <property type="match status" value="1"/>
</dbReference>
<dbReference type="Gene3D" id="3.40.50.150">
    <property type="entry name" value="Vaccinia Virus protein VP39"/>
    <property type="match status" value="1"/>
</dbReference>
<dbReference type="HAMAP" id="MF_01547">
    <property type="entry name" value="RNA_methyltr_E"/>
    <property type="match status" value="1"/>
</dbReference>
<dbReference type="InterPro" id="IPR050082">
    <property type="entry name" value="RNA_methyltr_RlmE"/>
</dbReference>
<dbReference type="InterPro" id="IPR002877">
    <property type="entry name" value="RNA_MeTrfase_FtsJ_dom"/>
</dbReference>
<dbReference type="InterPro" id="IPR015507">
    <property type="entry name" value="rRNA-MeTfrase_E"/>
</dbReference>
<dbReference type="InterPro" id="IPR004512">
    <property type="entry name" value="rRNA_MeTrfase_gammaproteobac"/>
</dbReference>
<dbReference type="InterPro" id="IPR029063">
    <property type="entry name" value="SAM-dependent_MTases_sf"/>
</dbReference>
<dbReference type="NCBIfam" id="NF008390">
    <property type="entry name" value="PRK11188.1"/>
    <property type="match status" value="1"/>
</dbReference>
<dbReference type="NCBIfam" id="TIGR00438">
    <property type="entry name" value="rrmJ"/>
    <property type="match status" value="1"/>
</dbReference>
<dbReference type="PANTHER" id="PTHR10920">
    <property type="entry name" value="RIBOSOMAL RNA METHYLTRANSFERASE"/>
    <property type="match status" value="1"/>
</dbReference>
<dbReference type="PANTHER" id="PTHR10920:SF18">
    <property type="entry name" value="RRNA METHYLTRANSFERASE 2, MITOCHONDRIAL"/>
    <property type="match status" value="1"/>
</dbReference>
<dbReference type="Pfam" id="PF01728">
    <property type="entry name" value="FtsJ"/>
    <property type="match status" value="1"/>
</dbReference>
<dbReference type="PIRSF" id="PIRSF005461">
    <property type="entry name" value="23S_rRNA_mtase"/>
    <property type="match status" value="1"/>
</dbReference>
<dbReference type="SUPFAM" id="SSF53335">
    <property type="entry name" value="S-adenosyl-L-methionine-dependent methyltransferases"/>
    <property type="match status" value="1"/>
</dbReference>
<feature type="chain" id="PRO_1000195012" description="Ribosomal RNA large subunit methyltransferase E">
    <location>
        <begin position="1"/>
        <end position="208"/>
    </location>
</feature>
<feature type="active site" description="Proton acceptor" evidence="1">
    <location>
        <position position="164"/>
    </location>
</feature>
<feature type="binding site" evidence="1">
    <location>
        <position position="63"/>
    </location>
    <ligand>
        <name>S-adenosyl-L-methionine</name>
        <dbReference type="ChEBI" id="CHEBI:59789"/>
    </ligand>
</feature>
<feature type="binding site" evidence="1">
    <location>
        <position position="65"/>
    </location>
    <ligand>
        <name>S-adenosyl-L-methionine</name>
        <dbReference type="ChEBI" id="CHEBI:59789"/>
    </ligand>
</feature>
<feature type="binding site" evidence="1">
    <location>
        <position position="83"/>
    </location>
    <ligand>
        <name>S-adenosyl-L-methionine</name>
        <dbReference type="ChEBI" id="CHEBI:59789"/>
    </ligand>
</feature>
<feature type="binding site" evidence="1">
    <location>
        <position position="99"/>
    </location>
    <ligand>
        <name>S-adenosyl-L-methionine</name>
        <dbReference type="ChEBI" id="CHEBI:59789"/>
    </ligand>
</feature>
<feature type="binding site" evidence="1">
    <location>
        <position position="124"/>
    </location>
    <ligand>
        <name>S-adenosyl-L-methionine</name>
        <dbReference type="ChEBI" id="CHEBI:59789"/>
    </ligand>
</feature>
<protein>
    <recommendedName>
        <fullName evidence="1">Ribosomal RNA large subunit methyltransferase E</fullName>
        <ecNumber evidence="1">2.1.1.166</ecNumber>
    </recommendedName>
    <alternativeName>
        <fullName evidence="1">23S rRNA Um2552 methyltransferase</fullName>
    </alternativeName>
    <alternativeName>
        <fullName evidence="1">rRNA (uridine-2'-O-)-methyltransferase</fullName>
    </alternativeName>
</protein>
<organism>
    <name type="scientific">Salmonella agona (strain SL483)</name>
    <dbReference type="NCBI Taxonomy" id="454166"/>
    <lineage>
        <taxon>Bacteria</taxon>
        <taxon>Pseudomonadati</taxon>
        <taxon>Pseudomonadota</taxon>
        <taxon>Gammaproteobacteria</taxon>
        <taxon>Enterobacterales</taxon>
        <taxon>Enterobacteriaceae</taxon>
        <taxon>Salmonella</taxon>
    </lineage>
</organism>
<sequence>MTGKKRSASSSRWLQEHFSDKYVQQAQKKGLRSRAWFKLDEIQQSDKLFKPGMTVVDLGAAPGGWSQYVVTQIGGKGRIIACDLLPMDPIVGVDFLQGDFRDELVMKALLERVGDSKVQVVMSDMAPNMSGTPAVDIPRAMYLVELALEMCRDVLAPGGSFVVKVFQGEGFDEYLREIRSLFTKVKVRKPDSSRARSREVYIVATGRK</sequence>
<accession>B5F6U7</accession>
<comment type="function">
    <text evidence="1">Specifically methylates the uridine in position 2552 of 23S rRNA at the 2'-O position of the ribose in the fully assembled 50S ribosomal subunit.</text>
</comment>
<comment type="catalytic activity">
    <reaction evidence="1">
        <text>uridine(2552) in 23S rRNA + S-adenosyl-L-methionine = 2'-O-methyluridine(2552) in 23S rRNA + S-adenosyl-L-homocysteine + H(+)</text>
        <dbReference type="Rhea" id="RHEA:42720"/>
        <dbReference type="Rhea" id="RHEA-COMP:10202"/>
        <dbReference type="Rhea" id="RHEA-COMP:10203"/>
        <dbReference type="ChEBI" id="CHEBI:15378"/>
        <dbReference type="ChEBI" id="CHEBI:57856"/>
        <dbReference type="ChEBI" id="CHEBI:59789"/>
        <dbReference type="ChEBI" id="CHEBI:65315"/>
        <dbReference type="ChEBI" id="CHEBI:74478"/>
        <dbReference type="EC" id="2.1.1.166"/>
    </reaction>
</comment>
<comment type="subcellular location">
    <subcellularLocation>
        <location evidence="1">Cytoplasm</location>
    </subcellularLocation>
</comment>
<comment type="similarity">
    <text evidence="1">Belongs to the class I-like SAM-binding methyltransferase superfamily. RNA methyltransferase RlmE family.</text>
</comment>
<keyword id="KW-0963">Cytoplasm</keyword>
<keyword id="KW-0489">Methyltransferase</keyword>
<keyword id="KW-0698">rRNA processing</keyword>
<keyword id="KW-0949">S-adenosyl-L-methionine</keyword>
<keyword id="KW-0808">Transferase</keyword>
<evidence type="ECO:0000255" key="1">
    <source>
        <dbReference type="HAMAP-Rule" id="MF_01547"/>
    </source>
</evidence>
<proteinExistence type="inferred from homology"/>
<reference key="1">
    <citation type="journal article" date="2011" name="J. Bacteriol.">
        <title>Comparative genomics of 28 Salmonella enterica isolates: evidence for CRISPR-mediated adaptive sublineage evolution.</title>
        <authorList>
            <person name="Fricke W.F."/>
            <person name="Mammel M.K."/>
            <person name="McDermott P.F."/>
            <person name="Tartera C."/>
            <person name="White D.G."/>
            <person name="Leclerc J.E."/>
            <person name="Ravel J."/>
            <person name="Cebula T.A."/>
        </authorList>
    </citation>
    <scope>NUCLEOTIDE SEQUENCE [LARGE SCALE GENOMIC DNA]</scope>
    <source>
        <strain>SL483</strain>
    </source>
</reference>